<gene>
    <name evidence="1" type="primary">rlpA</name>
    <name type="ordered locus">RBE_0322</name>
</gene>
<reference key="1">
    <citation type="journal article" date="2006" name="PLoS Genet.">
        <title>Genome sequence of Rickettsia bellii illuminates the role of amoebae in gene exchanges between intracellular pathogens.</title>
        <authorList>
            <person name="Ogata H."/>
            <person name="La Scola B."/>
            <person name="Audic S."/>
            <person name="Renesto P."/>
            <person name="Blanc G."/>
            <person name="Robert C."/>
            <person name="Fournier P.-E."/>
            <person name="Claverie J.-M."/>
            <person name="Raoult D."/>
        </authorList>
    </citation>
    <scope>NUCLEOTIDE SEQUENCE [LARGE SCALE GENOMIC DNA]</scope>
    <source>
        <strain>RML369-C</strain>
    </source>
</reference>
<protein>
    <recommendedName>
        <fullName evidence="1">Endolytic peptidoglycan transglycosylase RlpA</fullName>
        <ecNumber evidence="1">4.2.2.-</ecNumber>
    </recommendedName>
</protein>
<evidence type="ECO:0000255" key="1">
    <source>
        <dbReference type="HAMAP-Rule" id="MF_02071"/>
    </source>
</evidence>
<organism>
    <name type="scientific">Rickettsia bellii (strain RML369-C)</name>
    <dbReference type="NCBI Taxonomy" id="336407"/>
    <lineage>
        <taxon>Bacteria</taxon>
        <taxon>Pseudomonadati</taxon>
        <taxon>Pseudomonadota</taxon>
        <taxon>Alphaproteobacteria</taxon>
        <taxon>Rickettsiales</taxon>
        <taxon>Rickettsiaceae</taxon>
        <taxon>Rickettsieae</taxon>
        <taxon>Rickettsia</taxon>
        <taxon>belli group</taxon>
    </lineage>
</organism>
<comment type="function">
    <text evidence="1">Lytic transglycosylase with a strong preference for naked glycan strands that lack stem peptides.</text>
</comment>
<comment type="subcellular location">
    <subcellularLocation>
        <location evidence="1">Cell membrane</location>
        <topology evidence="1">Lipid-anchor</topology>
    </subcellularLocation>
</comment>
<comment type="similarity">
    <text evidence="1">Belongs to the RlpA family.</text>
</comment>
<name>RLPA_RICBR</name>
<sequence length="227" mass="25462">MMNHKFVLLILLIFYCFFLSGCNNSKKTPCSRKHSHKELSKDDPHNLVYKGYYKVGSQYKIKGKTYKPNAPKSFTETGYASWYGGGGDKFHGKKTANGDMFNKNLLTAAHKTLPLPCLVKVTNKTNNKSVILMVNDRGPFKPNRIIDVSAKAAEVLAFKKQGLAKVKIEYLHAETEKFLKNIKVNKSSNKTLAKSSKKPSSTKVANNKCSINCHIKLVNLKYKLAVN</sequence>
<keyword id="KW-1003">Cell membrane</keyword>
<keyword id="KW-0961">Cell wall biogenesis/degradation</keyword>
<keyword id="KW-0449">Lipoprotein</keyword>
<keyword id="KW-0456">Lyase</keyword>
<keyword id="KW-0472">Membrane</keyword>
<keyword id="KW-0564">Palmitate</keyword>
<keyword id="KW-0732">Signal</keyword>
<dbReference type="EC" id="4.2.2.-" evidence="1"/>
<dbReference type="EMBL" id="CP000087">
    <property type="protein sequence ID" value="ABE04403.1"/>
    <property type="molecule type" value="Genomic_DNA"/>
</dbReference>
<dbReference type="SMR" id="Q1RJR1"/>
<dbReference type="KEGG" id="rbe:RBE_0322"/>
<dbReference type="eggNOG" id="COG0797">
    <property type="taxonomic scope" value="Bacteria"/>
</dbReference>
<dbReference type="HOGENOM" id="CLU_042923_6_1_5"/>
<dbReference type="Proteomes" id="UP000001951">
    <property type="component" value="Chromosome"/>
</dbReference>
<dbReference type="GO" id="GO:0005886">
    <property type="term" value="C:plasma membrane"/>
    <property type="evidence" value="ECO:0007669"/>
    <property type="project" value="UniProtKB-SubCell"/>
</dbReference>
<dbReference type="GO" id="GO:0008932">
    <property type="term" value="F:lytic endotransglycosylase activity"/>
    <property type="evidence" value="ECO:0007669"/>
    <property type="project" value="UniProtKB-UniRule"/>
</dbReference>
<dbReference type="GO" id="GO:0071555">
    <property type="term" value="P:cell wall organization"/>
    <property type="evidence" value="ECO:0007669"/>
    <property type="project" value="UniProtKB-KW"/>
</dbReference>
<dbReference type="GO" id="GO:0000270">
    <property type="term" value="P:peptidoglycan metabolic process"/>
    <property type="evidence" value="ECO:0007669"/>
    <property type="project" value="UniProtKB-UniRule"/>
</dbReference>
<dbReference type="CDD" id="cd22268">
    <property type="entry name" value="DPBB_RlpA-like"/>
    <property type="match status" value="1"/>
</dbReference>
<dbReference type="Gene3D" id="2.40.40.10">
    <property type="entry name" value="RlpA-like domain"/>
    <property type="match status" value="1"/>
</dbReference>
<dbReference type="HAMAP" id="MF_02071">
    <property type="entry name" value="RlpA"/>
    <property type="match status" value="1"/>
</dbReference>
<dbReference type="InterPro" id="IPR034718">
    <property type="entry name" value="RlpA"/>
</dbReference>
<dbReference type="InterPro" id="IPR009009">
    <property type="entry name" value="RlpA-like_DPBB"/>
</dbReference>
<dbReference type="InterPro" id="IPR036908">
    <property type="entry name" value="RlpA-like_sf"/>
</dbReference>
<dbReference type="InterPro" id="IPR012997">
    <property type="entry name" value="RplA"/>
</dbReference>
<dbReference type="NCBIfam" id="TIGR00413">
    <property type="entry name" value="rlpA"/>
    <property type="match status" value="1"/>
</dbReference>
<dbReference type="PANTHER" id="PTHR34183">
    <property type="entry name" value="ENDOLYTIC PEPTIDOGLYCAN TRANSGLYCOSYLASE RLPA"/>
    <property type="match status" value="1"/>
</dbReference>
<dbReference type="PANTHER" id="PTHR34183:SF1">
    <property type="entry name" value="ENDOLYTIC PEPTIDOGLYCAN TRANSGLYCOSYLASE RLPA"/>
    <property type="match status" value="1"/>
</dbReference>
<dbReference type="Pfam" id="PF03330">
    <property type="entry name" value="DPBB_1"/>
    <property type="match status" value="1"/>
</dbReference>
<dbReference type="SUPFAM" id="SSF50685">
    <property type="entry name" value="Barwin-like endoglucanases"/>
    <property type="match status" value="1"/>
</dbReference>
<dbReference type="PROSITE" id="PS51257">
    <property type="entry name" value="PROKAR_LIPOPROTEIN"/>
    <property type="match status" value="1"/>
</dbReference>
<accession>Q1RJR1</accession>
<proteinExistence type="inferred from homology"/>
<feature type="signal peptide" evidence="1">
    <location>
        <begin position="1"/>
        <end position="21"/>
    </location>
</feature>
<feature type="chain" id="PRO_0000280826" description="Endolytic peptidoglycan transglycosylase RlpA" evidence="1">
    <location>
        <begin position="22"/>
        <end position="227"/>
    </location>
</feature>
<feature type="lipid moiety-binding region" description="N-palmitoyl cysteine" evidence="1">
    <location>
        <position position="22"/>
    </location>
</feature>
<feature type="lipid moiety-binding region" description="S-diacylglycerol cysteine" evidence="1">
    <location>
        <position position="22"/>
    </location>
</feature>